<accession>A4TEB8</accession>
<keyword id="KW-0687">Ribonucleoprotein</keyword>
<keyword id="KW-0689">Ribosomal protein</keyword>
<keyword id="KW-0694">RNA-binding</keyword>
<keyword id="KW-0699">rRNA-binding</keyword>
<gene>
    <name evidence="1" type="primary">rpsC</name>
    <name type="ordered locus">Mflv_5043</name>
</gene>
<reference key="1">
    <citation type="submission" date="2007-04" db="EMBL/GenBank/DDBJ databases">
        <title>Complete sequence of chromosome of Mycobacterium gilvum PYR-GCK.</title>
        <authorList>
            <consortium name="US DOE Joint Genome Institute"/>
            <person name="Copeland A."/>
            <person name="Lucas S."/>
            <person name="Lapidus A."/>
            <person name="Barry K."/>
            <person name="Detter J.C."/>
            <person name="Glavina del Rio T."/>
            <person name="Hammon N."/>
            <person name="Israni S."/>
            <person name="Dalin E."/>
            <person name="Tice H."/>
            <person name="Pitluck S."/>
            <person name="Chain P."/>
            <person name="Malfatti S."/>
            <person name="Shin M."/>
            <person name="Vergez L."/>
            <person name="Schmutz J."/>
            <person name="Larimer F."/>
            <person name="Land M."/>
            <person name="Hauser L."/>
            <person name="Kyrpides N."/>
            <person name="Mikhailova N."/>
            <person name="Miller C."/>
            <person name="Richardson P."/>
        </authorList>
    </citation>
    <scope>NUCLEOTIDE SEQUENCE [LARGE SCALE GENOMIC DNA]</scope>
    <source>
        <strain>PYR-GCK</strain>
    </source>
</reference>
<evidence type="ECO:0000255" key="1">
    <source>
        <dbReference type="HAMAP-Rule" id="MF_01309"/>
    </source>
</evidence>
<evidence type="ECO:0000256" key="2">
    <source>
        <dbReference type="SAM" id="MobiDB-lite"/>
    </source>
</evidence>
<evidence type="ECO:0000305" key="3"/>
<name>RS3_MYCGI</name>
<protein>
    <recommendedName>
        <fullName evidence="1">Small ribosomal subunit protein uS3</fullName>
    </recommendedName>
    <alternativeName>
        <fullName evidence="3">30S ribosomal protein S3</fullName>
    </alternativeName>
</protein>
<comment type="function">
    <text evidence="1">Binds the lower part of the 30S subunit head. Binds mRNA in the 70S ribosome, positioning it for translation.</text>
</comment>
<comment type="subunit">
    <text evidence="1">Part of the 30S ribosomal subunit. Forms a tight complex with proteins S10 and S14.</text>
</comment>
<comment type="similarity">
    <text evidence="1">Belongs to the universal ribosomal protein uS3 family.</text>
</comment>
<organism>
    <name type="scientific">Mycolicibacterium gilvum (strain PYR-GCK)</name>
    <name type="common">Mycobacterium gilvum (strain PYR-GCK)</name>
    <dbReference type="NCBI Taxonomy" id="350054"/>
    <lineage>
        <taxon>Bacteria</taxon>
        <taxon>Bacillati</taxon>
        <taxon>Actinomycetota</taxon>
        <taxon>Actinomycetes</taxon>
        <taxon>Mycobacteriales</taxon>
        <taxon>Mycobacteriaceae</taxon>
        <taxon>Mycolicibacterium</taxon>
    </lineage>
</organism>
<sequence length="278" mass="30520">MGQKINPHGFRLGITTDWKSRWYADKQYADYIKEDVAIRKLLATGLERAGIADVEIERTRDRVRVDIHTARPGIVIGRRGTEADRIRADLEKLTKKQVQLNILEVKNPESRAQLVAQGVAEQLSNRVAFRRAMRKAIQSAMRQPNVKGIRVQCSGRLGGAEMSRSEFYREGRVPLHTLRADIDYGLYEAKTTFGRIGVKVWIYKGDIVGGKRELAAAAPAGADRPRRERPSGTRPRRSGASGTTATSTDAGRAATEEAPATDAAATAPAAGQPETTES</sequence>
<proteinExistence type="inferred from homology"/>
<dbReference type="EMBL" id="CP000656">
    <property type="protein sequence ID" value="ABP47509.1"/>
    <property type="molecule type" value="Genomic_DNA"/>
</dbReference>
<dbReference type="SMR" id="A4TEB8"/>
<dbReference type="STRING" id="350054.Mflv_5043"/>
<dbReference type="KEGG" id="mgi:Mflv_5043"/>
<dbReference type="eggNOG" id="COG0092">
    <property type="taxonomic scope" value="Bacteria"/>
</dbReference>
<dbReference type="HOGENOM" id="CLU_058591_0_0_11"/>
<dbReference type="OrthoDB" id="9806396at2"/>
<dbReference type="GO" id="GO:0022627">
    <property type="term" value="C:cytosolic small ribosomal subunit"/>
    <property type="evidence" value="ECO:0007669"/>
    <property type="project" value="TreeGrafter"/>
</dbReference>
<dbReference type="GO" id="GO:0003729">
    <property type="term" value="F:mRNA binding"/>
    <property type="evidence" value="ECO:0007669"/>
    <property type="project" value="UniProtKB-UniRule"/>
</dbReference>
<dbReference type="GO" id="GO:0019843">
    <property type="term" value="F:rRNA binding"/>
    <property type="evidence" value="ECO:0007669"/>
    <property type="project" value="UniProtKB-UniRule"/>
</dbReference>
<dbReference type="GO" id="GO:0003735">
    <property type="term" value="F:structural constituent of ribosome"/>
    <property type="evidence" value="ECO:0007669"/>
    <property type="project" value="InterPro"/>
</dbReference>
<dbReference type="GO" id="GO:0006412">
    <property type="term" value="P:translation"/>
    <property type="evidence" value="ECO:0007669"/>
    <property type="project" value="UniProtKB-UniRule"/>
</dbReference>
<dbReference type="CDD" id="cd02412">
    <property type="entry name" value="KH-II_30S_S3"/>
    <property type="match status" value="1"/>
</dbReference>
<dbReference type="FunFam" id="3.30.1140.32:FF:000002">
    <property type="entry name" value="30S ribosomal protein S3"/>
    <property type="match status" value="1"/>
</dbReference>
<dbReference type="FunFam" id="3.30.300.20:FF:000001">
    <property type="entry name" value="30S ribosomal protein S3"/>
    <property type="match status" value="1"/>
</dbReference>
<dbReference type="Gene3D" id="3.30.300.20">
    <property type="match status" value="1"/>
</dbReference>
<dbReference type="Gene3D" id="3.30.1140.32">
    <property type="entry name" value="Ribosomal protein S3, C-terminal domain"/>
    <property type="match status" value="1"/>
</dbReference>
<dbReference type="HAMAP" id="MF_01309_B">
    <property type="entry name" value="Ribosomal_uS3_B"/>
    <property type="match status" value="1"/>
</dbReference>
<dbReference type="InterPro" id="IPR004087">
    <property type="entry name" value="KH_dom"/>
</dbReference>
<dbReference type="InterPro" id="IPR015946">
    <property type="entry name" value="KH_dom-like_a/b"/>
</dbReference>
<dbReference type="InterPro" id="IPR004044">
    <property type="entry name" value="KH_dom_type_2"/>
</dbReference>
<dbReference type="InterPro" id="IPR009019">
    <property type="entry name" value="KH_sf_prok-type"/>
</dbReference>
<dbReference type="InterPro" id="IPR036419">
    <property type="entry name" value="Ribosomal_S3_C_sf"/>
</dbReference>
<dbReference type="InterPro" id="IPR005704">
    <property type="entry name" value="Ribosomal_uS3_bac-typ"/>
</dbReference>
<dbReference type="InterPro" id="IPR001351">
    <property type="entry name" value="Ribosomal_uS3_C"/>
</dbReference>
<dbReference type="InterPro" id="IPR018280">
    <property type="entry name" value="Ribosomal_uS3_CS"/>
</dbReference>
<dbReference type="NCBIfam" id="TIGR01009">
    <property type="entry name" value="rpsC_bact"/>
    <property type="match status" value="1"/>
</dbReference>
<dbReference type="PANTHER" id="PTHR11760">
    <property type="entry name" value="30S/40S RIBOSOMAL PROTEIN S3"/>
    <property type="match status" value="1"/>
</dbReference>
<dbReference type="PANTHER" id="PTHR11760:SF19">
    <property type="entry name" value="SMALL RIBOSOMAL SUBUNIT PROTEIN US3C"/>
    <property type="match status" value="1"/>
</dbReference>
<dbReference type="Pfam" id="PF07650">
    <property type="entry name" value="KH_2"/>
    <property type="match status" value="1"/>
</dbReference>
<dbReference type="Pfam" id="PF00189">
    <property type="entry name" value="Ribosomal_S3_C"/>
    <property type="match status" value="1"/>
</dbReference>
<dbReference type="SMART" id="SM00322">
    <property type="entry name" value="KH"/>
    <property type="match status" value="1"/>
</dbReference>
<dbReference type="SUPFAM" id="SSF54814">
    <property type="entry name" value="Prokaryotic type KH domain (KH-domain type II)"/>
    <property type="match status" value="1"/>
</dbReference>
<dbReference type="SUPFAM" id="SSF54821">
    <property type="entry name" value="Ribosomal protein S3 C-terminal domain"/>
    <property type="match status" value="1"/>
</dbReference>
<dbReference type="PROSITE" id="PS50823">
    <property type="entry name" value="KH_TYPE_2"/>
    <property type="match status" value="1"/>
</dbReference>
<dbReference type="PROSITE" id="PS00548">
    <property type="entry name" value="RIBOSOMAL_S3"/>
    <property type="match status" value="1"/>
</dbReference>
<feature type="chain" id="PRO_1000086135" description="Small ribosomal subunit protein uS3">
    <location>
        <begin position="1"/>
        <end position="278"/>
    </location>
</feature>
<feature type="domain" description="KH type-2" evidence="1">
    <location>
        <begin position="38"/>
        <end position="106"/>
    </location>
</feature>
<feature type="region of interest" description="Disordered" evidence="2">
    <location>
        <begin position="215"/>
        <end position="278"/>
    </location>
</feature>
<feature type="compositionally biased region" description="Low complexity" evidence="2">
    <location>
        <begin position="238"/>
        <end position="278"/>
    </location>
</feature>